<feature type="chain" id="PRO_0000324710" description="Truncated HBeAg protein">
    <location>
        <begin position="1"/>
        <end position="27"/>
    </location>
</feature>
<sequence>MQLFHLCLVISCSCPTVQASKLCLGWL</sequence>
<proteinExistence type="predicted"/>
<organism>
    <name type="scientific">Hepatitis B virus genotype B1 (isolate Japan/Yamagata-2/1998)</name>
    <name type="common">HBV-B</name>
    <dbReference type="NCBI Taxonomy" id="489464"/>
    <lineage>
        <taxon>Viruses</taxon>
        <taxon>Riboviria</taxon>
        <taxon>Pararnavirae</taxon>
        <taxon>Artverviricota</taxon>
        <taxon>Revtraviricetes</taxon>
        <taxon>Blubervirales</taxon>
        <taxon>Hepadnaviridae</taxon>
        <taxon>Orthohepadnavirus</taxon>
        <taxon>Hepatitis B virus</taxon>
    </lineage>
</organism>
<comment type="alternative products">
    <event type="alternative initiation"/>
    <isoform>
        <id>P0C6H1-1</id>
        <name>External core antigen</name>
        <sequence type="displayed"/>
    </isoform>
    <isoform>
        <id>Q9QBF2-1</id>
        <name>Capsid protein</name>
        <sequence type="external"/>
    </isoform>
</comment>
<comment type="miscellaneous">
    <text>This virus has been isolated from patient with fulminant hepatitis. A genomic mutation in 1898 creates a stop codon at position 28 of HBeAg, without affecting capsid open reading frame. The HBeAg negative variants of HBV are associated with fulminant hepatitis, but can also be found in patients with persistent infection and chronic hepatitis.</text>
</comment>
<protein>
    <recommendedName>
        <fullName>Truncated HBeAg protein</fullName>
    </recommendedName>
</protein>
<gene>
    <name type="primary">C</name>
</gene>
<name>HBEAG_HBVB7</name>
<accession>P0C6H1</accession>
<reference key="1">
    <citation type="journal article" date="1999" name="Yamagata Med. J.">
        <title>Sequence analysis of the entire genome of hepatitis B virus from a patient with fulminant hepatitis.</title>
        <authorList>
            <person name="Koseki T."/>
            <person name="Hongo S."/>
            <person name="Muraki Y."/>
            <person name="Sugawara K."/>
            <person name="Matsuzaki Y."/>
            <person name="Nakamura K."/>
        </authorList>
    </citation>
    <scope>NUCLEOTIDE SEQUENCE [GENOMIC DNA]</scope>
</reference>
<dbReference type="EMBL" id="AB010290">
    <property type="status" value="NOT_ANNOTATED_CDS"/>
    <property type="molecule type" value="Genomic_DNA"/>
</dbReference>
<dbReference type="Proteomes" id="UP000007918">
    <property type="component" value="Genome"/>
</dbReference>
<dbReference type="GO" id="GO:0005198">
    <property type="term" value="F:structural molecule activity"/>
    <property type="evidence" value="ECO:0007669"/>
    <property type="project" value="InterPro"/>
</dbReference>
<dbReference type="InterPro" id="IPR013195">
    <property type="entry name" value="Hepatitis_B_virus_capsid_N"/>
</dbReference>
<dbReference type="Pfam" id="PF08290">
    <property type="entry name" value="Hep_core_N"/>
    <property type="match status" value="1"/>
</dbReference>
<organismHost>
    <name type="scientific">Homo sapiens</name>
    <name type="common">Human</name>
    <dbReference type="NCBI Taxonomy" id="9606"/>
</organismHost>
<organismHost>
    <name type="scientific">Pan troglodytes</name>
    <name type="common">Chimpanzee</name>
    <dbReference type="NCBI Taxonomy" id="9598"/>
</organismHost>
<keyword id="KW-0024">Alternative initiation</keyword>